<proteinExistence type="evidence at protein level"/>
<organism>
    <name type="scientific">Thermosynechococcus vestitus (strain NIES-2133 / IAM M-273 / BP-1)</name>
    <dbReference type="NCBI Taxonomy" id="197221"/>
    <lineage>
        <taxon>Bacteria</taxon>
        <taxon>Bacillati</taxon>
        <taxon>Cyanobacteriota</taxon>
        <taxon>Cyanophyceae</taxon>
        <taxon>Acaryochloridales</taxon>
        <taxon>Thermosynechococcaceae</taxon>
        <taxon>Thermosynechococcus</taxon>
    </lineage>
</organism>
<name>PSAK_THEVB</name>
<dbReference type="EMBL" id="BA000039">
    <property type="protein sequence ID" value="BAC09825.1"/>
    <property type="status" value="ALT_INIT"/>
    <property type="molecule type" value="Genomic_DNA"/>
</dbReference>
<dbReference type="RefSeq" id="NP_683063.1">
    <property type="nucleotide sequence ID" value="NC_004113.1"/>
</dbReference>
<dbReference type="RefSeq" id="WP_164921012.1">
    <property type="nucleotide sequence ID" value="NC_004113.1"/>
</dbReference>
<dbReference type="PDB" id="1C51">
    <property type="method" value="X-ray"/>
    <property type="resolution" value="4.00 A"/>
</dbReference>
<dbReference type="PDB" id="1JB0">
    <property type="method" value="X-ray"/>
    <property type="resolution" value="2.50 A"/>
    <property type="chains" value="K=1-83"/>
</dbReference>
<dbReference type="PDB" id="2PPS">
    <property type="method" value="X-ray"/>
    <property type="resolution" value="4.00 A"/>
</dbReference>
<dbReference type="PDB" id="3PCQ">
    <property type="method" value="X-ray"/>
    <property type="resolution" value="8.98 A"/>
    <property type="chains" value="K=1-83"/>
</dbReference>
<dbReference type="PDB" id="4FE1">
    <property type="method" value="X-ray"/>
    <property type="resolution" value="4.92 A"/>
    <property type="chains" value="K=1-83"/>
</dbReference>
<dbReference type="PDB" id="5ZF0">
    <property type="method" value="X-ray"/>
    <property type="resolution" value="4.20 A"/>
    <property type="chains" value="K1/K2/K3/K4/K5/K6=1-83"/>
</dbReference>
<dbReference type="PDB" id="6PFY">
    <property type="method" value="X-ray"/>
    <property type="resolution" value="2.90 A"/>
    <property type="chains" value="K/T/g=1-83"/>
</dbReference>
<dbReference type="PDB" id="6PGK">
    <property type="method" value="X-ray"/>
    <property type="resolution" value="2.90 A"/>
    <property type="chains" value="K/T/g=1-83"/>
</dbReference>
<dbReference type="PDB" id="6TRA">
    <property type="method" value="EM"/>
    <property type="resolution" value="2.85 A"/>
    <property type="chains" value="K=1-83"/>
</dbReference>
<dbReference type="PDB" id="6TRC">
    <property type="method" value="EM"/>
    <property type="resolution" value="2.98 A"/>
    <property type="chains" value="9/K/k=1-83"/>
</dbReference>
<dbReference type="PDB" id="6TRD">
    <property type="method" value="EM"/>
    <property type="resolution" value="3.16 A"/>
    <property type="chains" value="9/K/k=1-83"/>
</dbReference>
<dbReference type="PDB" id="7BW2">
    <property type="method" value="X-ray"/>
    <property type="resolution" value="6.50 A"/>
    <property type="chains" value="K=1-83"/>
</dbReference>
<dbReference type="PDB" id="7FIX">
    <property type="method" value="EM"/>
    <property type="resolution" value="1.97 A"/>
    <property type="chains" value="K1/K2/K3=1-83"/>
</dbReference>
<dbReference type="PDB" id="7M75">
    <property type="method" value="X-ray"/>
    <property type="resolution" value="2.75 A"/>
    <property type="chains" value="K=1-83"/>
</dbReference>
<dbReference type="PDB" id="7M76">
    <property type="method" value="X-ray"/>
    <property type="resolution" value="3.00 A"/>
    <property type="chains" value="K=1-83"/>
</dbReference>
<dbReference type="PDB" id="7M78">
    <property type="method" value="X-ray"/>
    <property type="resolution" value="3.00 A"/>
    <property type="chains" value="K=1-83"/>
</dbReference>
<dbReference type="PDBsum" id="1C51"/>
<dbReference type="PDBsum" id="1JB0"/>
<dbReference type="PDBsum" id="2PPS"/>
<dbReference type="PDBsum" id="3PCQ"/>
<dbReference type="PDBsum" id="4FE1"/>
<dbReference type="PDBsum" id="5ZF0"/>
<dbReference type="PDBsum" id="6PFY"/>
<dbReference type="PDBsum" id="6PGK"/>
<dbReference type="PDBsum" id="6TRA"/>
<dbReference type="PDBsum" id="6TRC"/>
<dbReference type="PDBsum" id="6TRD"/>
<dbReference type="PDBsum" id="7BW2"/>
<dbReference type="PDBsum" id="7FIX"/>
<dbReference type="PDBsum" id="7M75"/>
<dbReference type="PDBsum" id="7M76"/>
<dbReference type="PDBsum" id="7M78"/>
<dbReference type="EMDB" id="EMD-10557"/>
<dbReference type="EMDB" id="EMD-10558"/>
<dbReference type="EMDB" id="EMD-10559"/>
<dbReference type="EMDB" id="EMD-31605"/>
<dbReference type="SMR" id="P0A425"/>
<dbReference type="IntAct" id="P0A425">
    <property type="interactions" value="1"/>
</dbReference>
<dbReference type="STRING" id="197221.gene:10748890"/>
<dbReference type="EnsemblBacteria" id="BAC09825">
    <property type="protein sequence ID" value="BAC09825"/>
    <property type="gene ID" value="BAC09825"/>
</dbReference>
<dbReference type="KEGG" id="tel:tsr2273"/>
<dbReference type="PATRIC" id="fig|197221.4.peg.2382"/>
<dbReference type="eggNOG" id="ENOG503323W">
    <property type="taxonomic scope" value="Bacteria"/>
</dbReference>
<dbReference type="EvolutionaryTrace" id="P0A425"/>
<dbReference type="Proteomes" id="UP000000440">
    <property type="component" value="Chromosome"/>
</dbReference>
<dbReference type="GO" id="GO:0009522">
    <property type="term" value="C:photosystem I"/>
    <property type="evidence" value="ECO:0007669"/>
    <property type="project" value="UniProtKB-KW"/>
</dbReference>
<dbReference type="GO" id="GO:0031676">
    <property type="term" value="C:plasma membrane-derived thylakoid membrane"/>
    <property type="evidence" value="ECO:0007669"/>
    <property type="project" value="UniProtKB-SubCell"/>
</dbReference>
<dbReference type="GO" id="GO:0015979">
    <property type="term" value="P:photosynthesis"/>
    <property type="evidence" value="ECO:0007669"/>
    <property type="project" value="UniProtKB-UniRule"/>
</dbReference>
<dbReference type="Gene3D" id="1.20.860.20">
    <property type="entry name" value="Photosystem I PsaK, reaction centre"/>
    <property type="match status" value="1"/>
</dbReference>
<dbReference type="HAMAP" id="MF_00474">
    <property type="entry name" value="PSI_PsaK"/>
    <property type="match status" value="1"/>
</dbReference>
<dbReference type="InterPro" id="IPR035982">
    <property type="entry name" value="PSI_centre_PsaK_sf"/>
</dbReference>
<dbReference type="InterPro" id="IPR000549">
    <property type="entry name" value="PSI_PsaG/PsaK"/>
</dbReference>
<dbReference type="InterPro" id="IPR017492">
    <property type="entry name" value="PSI_PsaK"/>
</dbReference>
<dbReference type="InterPro" id="IPR037101">
    <property type="entry name" value="PSI_PsaK_bact"/>
</dbReference>
<dbReference type="NCBIfam" id="TIGR03049">
    <property type="entry name" value="PS_I_psaK"/>
    <property type="match status" value="1"/>
</dbReference>
<dbReference type="Pfam" id="PF01241">
    <property type="entry name" value="PSI_PSAK"/>
    <property type="match status" value="1"/>
</dbReference>
<dbReference type="SUPFAM" id="SSF81563">
    <property type="entry name" value="Photosystem I reaction center subunit X, PsaK"/>
    <property type="match status" value="1"/>
</dbReference>
<dbReference type="PROSITE" id="PS01026">
    <property type="entry name" value="PHOTOSYSTEM_I_PSAGK"/>
    <property type="match status" value="1"/>
</dbReference>
<sequence length="83" mass="8480">MVLATLPDTTWTPSVGLVVILCNLFAIALGRYAIQSRGKGPGLPIALPALFEGFGLPELLATTSFGHLLAAGVVSGLQYAGAL</sequence>
<feature type="propeptide" id="PRO_0000029402" evidence="1">
    <location>
        <begin position="1"/>
        <end position="4"/>
    </location>
</feature>
<feature type="chain" id="PRO_0000029403" description="Photosystem I reaction center subunit PsaK">
    <location>
        <begin position="5"/>
        <end position="83"/>
    </location>
</feature>
<feature type="transmembrane region" description="Helical" evidence="2">
    <location>
        <begin position="12"/>
        <end position="30"/>
    </location>
</feature>
<feature type="transmembrane region" description="Helical" evidence="2">
    <location>
        <begin position="68"/>
        <end position="83"/>
    </location>
</feature>
<feature type="helix" evidence="4">
    <location>
        <begin position="21"/>
        <end position="31"/>
    </location>
</feature>
<feature type="turn" evidence="5">
    <location>
        <begin position="32"/>
        <end position="34"/>
    </location>
</feature>
<feature type="helix" evidence="4">
    <location>
        <begin position="59"/>
        <end position="61"/>
    </location>
</feature>
<feature type="helix" evidence="4">
    <location>
        <begin position="62"/>
        <end position="73"/>
    </location>
</feature>
<protein>
    <recommendedName>
        <fullName>Photosystem I reaction center subunit PsaK</fullName>
    </recommendedName>
    <alternativeName>
        <fullName>Light-harvesting 8.0 kDa polypeptide</fullName>
    </alternativeName>
    <alternativeName>
        <fullName>Photosystem I subunit X</fullName>
    </alternativeName>
</protein>
<evidence type="ECO:0000250" key="1"/>
<evidence type="ECO:0000255" key="2"/>
<evidence type="ECO:0000305" key="3"/>
<evidence type="ECO:0007829" key="4">
    <source>
        <dbReference type="PDB" id="1JB0"/>
    </source>
</evidence>
<evidence type="ECO:0007829" key="5">
    <source>
        <dbReference type="PDB" id="7M75"/>
    </source>
</evidence>
<accession>P0A425</accession>
<accession>P20453</accession>
<gene>
    <name type="primary">psaK</name>
    <name type="ordered locus">tsr2273</name>
</gene>
<keyword id="KW-0002">3D-structure</keyword>
<keyword id="KW-0472">Membrane</keyword>
<keyword id="KW-0602">Photosynthesis</keyword>
<keyword id="KW-0603">Photosystem I</keyword>
<keyword id="KW-1185">Reference proteome</keyword>
<keyword id="KW-0793">Thylakoid</keyword>
<keyword id="KW-0812">Transmembrane</keyword>
<keyword id="KW-1133">Transmembrane helix</keyword>
<reference key="1">
    <citation type="journal article" date="2002" name="DNA Res.">
        <title>Complete genome structure of the thermophilic cyanobacterium Thermosynechococcus elongatus BP-1.</title>
        <authorList>
            <person name="Nakamura Y."/>
            <person name="Kaneko T."/>
            <person name="Sato S."/>
            <person name="Ikeuchi M."/>
            <person name="Katoh H."/>
            <person name="Sasamoto S."/>
            <person name="Watanabe A."/>
            <person name="Iriguchi M."/>
            <person name="Kawashima K."/>
            <person name="Kimura T."/>
            <person name="Kishida Y."/>
            <person name="Kiyokawa C."/>
            <person name="Kohara M."/>
            <person name="Matsumoto M."/>
            <person name="Matsuno A."/>
            <person name="Nakazaki N."/>
            <person name="Shimpo S."/>
            <person name="Sugimoto M."/>
            <person name="Takeuchi C."/>
            <person name="Yamada M."/>
            <person name="Tabata S."/>
        </authorList>
    </citation>
    <scope>NUCLEOTIDE SEQUENCE [LARGE SCALE GENOMIC DNA]</scope>
    <source>
        <strain>NIES-2133 / IAM M-273 / BP-1</strain>
    </source>
</reference>
<reference key="2">
    <citation type="journal article" date="1996" name="Nat. Struct. Biol.">
        <title>Photosystem I at 4-A resolution represents the first structural model of a joint photosynthetic reaction centre and core antenna system.</title>
        <authorList>
            <person name="Krauss N."/>
            <person name="Schubert W.-D."/>
            <person name="Klukas O."/>
            <person name="Fromme P."/>
            <person name="Witt H.T."/>
            <person name="Saenger W."/>
        </authorList>
    </citation>
    <scope>X-RAY CRYSTALLOGRAPHY (4.0 ANGSTROMS)</scope>
</reference>
<reference key="3">
    <citation type="journal article" date="1999" name="J. Biol. Chem.">
        <title>Photosystem I, an improved model of the stromal subunits PsaC, PsaD, and PsaE.</title>
        <authorList>
            <person name="Klukas O."/>
            <person name="Schubert W.-D."/>
            <person name="Jordan P."/>
            <person name="Krauss N."/>
            <person name="Fromme P."/>
            <person name="Witt H.T."/>
            <person name="Saenger W."/>
        </authorList>
    </citation>
    <scope>X-RAY CRYSTALLOGRAPHY (4.0 ANGSTROMS)</scope>
</reference>
<reference key="4">
    <citation type="journal article" date="2001" name="Nature">
        <title>Three-dimensional structure of cyanobacterial photosystem I at 2.5 A resolution.</title>
        <authorList>
            <person name="Jordan P."/>
            <person name="Fromme P."/>
            <person name="Witt H.T."/>
            <person name="Klukas O."/>
            <person name="Saenger W."/>
            <person name="Krauss N."/>
        </authorList>
    </citation>
    <scope>X-RAY CRYSTALLOGRAPHY (2.5 ANGSTROMS)</scope>
</reference>
<comment type="subcellular location">
    <subcellularLocation>
        <location evidence="3">Cellular thylakoid membrane</location>
        <topology evidence="3">Multi-pass membrane protein</topology>
    </subcellularLocation>
</comment>
<comment type="similarity">
    <text evidence="3">Belongs to the PsaG/PsaK family.</text>
</comment>
<comment type="sequence caution" evidence="3">
    <conflict type="erroneous initiation">
        <sequence resource="EMBL-CDS" id="BAC09825"/>
    </conflict>
    <text>Extended N-terminus.</text>
</comment>